<protein>
    <recommendedName>
        <fullName evidence="1">UPF0502 protein PLES_16071</fullName>
    </recommendedName>
</protein>
<organism>
    <name type="scientific">Pseudomonas aeruginosa (strain LESB58)</name>
    <dbReference type="NCBI Taxonomy" id="557722"/>
    <lineage>
        <taxon>Bacteria</taxon>
        <taxon>Pseudomonadati</taxon>
        <taxon>Pseudomonadota</taxon>
        <taxon>Gammaproteobacteria</taxon>
        <taxon>Pseudomonadales</taxon>
        <taxon>Pseudomonadaceae</taxon>
        <taxon>Pseudomonas</taxon>
    </lineage>
</organism>
<comment type="similarity">
    <text evidence="1">Belongs to the UPF0502 family.</text>
</comment>
<feature type="chain" id="PRO_1000201248" description="UPF0502 protein PLES_16071">
    <location>
        <begin position="1"/>
        <end position="221"/>
    </location>
</feature>
<evidence type="ECO:0000255" key="1">
    <source>
        <dbReference type="HAMAP-Rule" id="MF_01584"/>
    </source>
</evidence>
<sequence>MSTEPNSPFVDDPLSAVDARILGSLVEKQATTPETYPLTLNALVLACNQKTSRDPVMNLTPGQVGQSLRQLEGRGLVRLVMGSRADRWEHTLGKGLELVAPQVALLGLLFLRGPQTLNELLTRSNRLHDFDDVEQIRHHLERLAGRGLAVHLERRAGQREERYMHLLGSQADLEAAVEAMGSDPERAAPAALSADAEARIAELETRLAALEERLARLEGGA</sequence>
<reference key="1">
    <citation type="journal article" date="2009" name="Genome Res.">
        <title>Newly introduced genomic prophage islands are critical determinants of in vivo competitiveness in the Liverpool epidemic strain of Pseudomonas aeruginosa.</title>
        <authorList>
            <person name="Winstanley C."/>
            <person name="Langille M.G.I."/>
            <person name="Fothergill J.L."/>
            <person name="Kukavica-Ibrulj I."/>
            <person name="Paradis-Bleau C."/>
            <person name="Sanschagrin F."/>
            <person name="Thomson N.R."/>
            <person name="Winsor G.L."/>
            <person name="Quail M.A."/>
            <person name="Lennard N."/>
            <person name="Bignell A."/>
            <person name="Clarke L."/>
            <person name="Seeger K."/>
            <person name="Saunders D."/>
            <person name="Harris D."/>
            <person name="Parkhill J."/>
            <person name="Hancock R.E.W."/>
            <person name="Brinkman F.S.L."/>
            <person name="Levesque R.C."/>
        </authorList>
    </citation>
    <scope>NUCLEOTIDE SEQUENCE [LARGE SCALE GENOMIC DNA]</scope>
    <source>
        <strain>LESB58</strain>
    </source>
</reference>
<accession>B7UYP4</accession>
<proteinExistence type="inferred from homology"/>
<dbReference type="EMBL" id="FM209186">
    <property type="protein sequence ID" value="CAW26335.1"/>
    <property type="molecule type" value="Genomic_DNA"/>
</dbReference>
<dbReference type="RefSeq" id="WP_003091932.1">
    <property type="nucleotide sequence ID" value="NC_011770.1"/>
</dbReference>
<dbReference type="SMR" id="B7UYP4"/>
<dbReference type="KEGG" id="pag:PLES_16071"/>
<dbReference type="HOGENOM" id="CLU_057831_2_0_6"/>
<dbReference type="Gene3D" id="1.10.10.10">
    <property type="entry name" value="Winged helix-like DNA-binding domain superfamily/Winged helix DNA-binding domain"/>
    <property type="match status" value="2"/>
</dbReference>
<dbReference type="HAMAP" id="MF_01584">
    <property type="entry name" value="UPF0502"/>
    <property type="match status" value="1"/>
</dbReference>
<dbReference type="InterPro" id="IPR007432">
    <property type="entry name" value="DUF480"/>
</dbReference>
<dbReference type="InterPro" id="IPR036388">
    <property type="entry name" value="WH-like_DNA-bd_sf"/>
</dbReference>
<dbReference type="InterPro" id="IPR036390">
    <property type="entry name" value="WH_DNA-bd_sf"/>
</dbReference>
<dbReference type="PANTHER" id="PTHR38768">
    <property type="entry name" value="UPF0502 PROTEIN YCEH"/>
    <property type="match status" value="1"/>
</dbReference>
<dbReference type="PANTHER" id="PTHR38768:SF1">
    <property type="entry name" value="UPF0502 PROTEIN YCEH"/>
    <property type="match status" value="1"/>
</dbReference>
<dbReference type="Pfam" id="PF04337">
    <property type="entry name" value="DUF480"/>
    <property type="match status" value="1"/>
</dbReference>
<dbReference type="SUPFAM" id="SSF46785">
    <property type="entry name" value="Winged helix' DNA-binding domain"/>
    <property type="match status" value="2"/>
</dbReference>
<gene>
    <name type="ordered locus">PLES_16071</name>
</gene>
<name>Y1607_PSEA8</name>